<reference key="1">
    <citation type="journal article" date="2004" name="Science">
        <title>The 1.2-megabase genome sequence of Mimivirus.</title>
        <authorList>
            <person name="Raoult D."/>
            <person name="Audic S."/>
            <person name="Robert C."/>
            <person name="Abergel C."/>
            <person name="Renesto P."/>
            <person name="Ogata H."/>
            <person name="La Scola B."/>
            <person name="Susan M."/>
            <person name="Claverie J.-M."/>
        </authorList>
    </citation>
    <scope>NUCLEOTIDE SEQUENCE [LARGE SCALE GENOMIC DNA]</scope>
    <source>
        <strain>Rowbotham-Bradford</strain>
    </source>
</reference>
<sequence>MVLSDFIYPACEGLCFPKISRTKDSNHKTYEFFNKKKHPKKYVDNSDALFLIKRARDSFLSHIKLKDKHMKKNYLTELSPEQIRGRFFLSGDKNFYCIYFYFTDEDAVFYCVFGIIEKSTGKHLLFVREFWSGSFDACCIKHNSFDYYSGDKYMEKTNVLNLPVILSNDTK</sequence>
<organismHost>
    <name type="scientific">Acanthamoeba polyphaga</name>
    <name type="common">Amoeba</name>
    <dbReference type="NCBI Taxonomy" id="5757"/>
</organismHost>
<dbReference type="EMBL" id="AY653733">
    <property type="protein sequence ID" value="AAV50299.1"/>
    <property type="molecule type" value="Genomic_DNA"/>
</dbReference>
<dbReference type="SMR" id="Q5UPA1"/>
<dbReference type="KEGG" id="vg:9924602"/>
<dbReference type="OrthoDB" id="35665at10239"/>
<dbReference type="Proteomes" id="UP000001134">
    <property type="component" value="Genome"/>
</dbReference>
<gene>
    <name type="ordered locus">MIMI_R24</name>
</gene>
<protein>
    <recommendedName>
        <fullName>Uncharacterized protein R24</fullName>
    </recommendedName>
</protein>
<keyword id="KW-1185">Reference proteome</keyword>
<proteinExistence type="inferred from homology"/>
<name>YR024_MIMIV</name>
<accession>Q5UPA1</accession>
<organism>
    <name type="scientific">Acanthamoeba polyphaga mimivirus</name>
    <name type="common">APMV</name>
    <dbReference type="NCBI Taxonomy" id="212035"/>
    <lineage>
        <taxon>Viruses</taxon>
        <taxon>Varidnaviria</taxon>
        <taxon>Bamfordvirae</taxon>
        <taxon>Nucleocytoviricota</taxon>
        <taxon>Megaviricetes</taxon>
        <taxon>Imitervirales</taxon>
        <taxon>Mimiviridae</taxon>
        <taxon>Megamimivirinae</taxon>
        <taxon>Mimivirus</taxon>
        <taxon>Mimivirus bradfordmassiliense</taxon>
    </lineage>
</organism>
<evidence type="ECO:0000305" key="1"/>
<feature type="chain" id="PRO_0000071184" description="Uncharacterized protein R24">
    <location>
        <begin position="1"/>
        <end position="171"/>
    </location>
</feature>
<comment type="similarity">
    <text evidence="1">Belongs to the mimivirus R24/R907 family.</text>
</comment>